<organism>
    <name type="scientific">Orientia tsutsugamushi (strain Ikeda)</name>
    <name type="common">Rickettsia tsutsugamushi</name>
    <dbReference type="NCBI Taxonomy" id="334380"/>
    <lineage>
        <taxon>Bacteria</taxon>
        <taxon>Pseudomonadati</taxon>
        <taxon>Pseudomonadota</taxon>
        <taxon>Alphaproteobacteria</taxon>
        <taxon>Rickettsiales</taxon>
        <taxon>Rickettsiaceae</taxon>
        <taxon>Rickettsieae</taxon>
        <taxon>Orientia</taxon>
    </lineage>
</organism>
<proteinExistence type="inferred from homology"/>
<comment type="function">
    <text evidence="1">Responsible for the release of ribosomes from messenger RNA at the termination of protein biosynthesis. May increase the efficiency of translation by recycling ribosomes from one round of translation to another.</text>
</comment>
<comment type="subcellular location">
    <subcellularLocation>
        <location evidence="1">Cytoplasm</location>
    </subcellularLocation>
</comment>
<comment type="similarity">
    <text evidence="1">Belongs to the RRF family.</text>
</comment>
<name>RRF_ORITI</name>
<evidence type="ECO:0000255" key="1">
    <source>
        <dbReference type="HAMAP-Rule" id="MF_00040"/>
    </source>
</evidence>
<keyword id="KW-0963">Cytoplasm</keyword>
<keyword id="KW-0648">Protein biosynthesis</keyword>
<sequence>MNHEELINSLTKKMNGALQVLDADLKGLRVGQASAYFLDPVQVEAYNSKVPILQVATISVSDTKTILVQVWDKSLVKAVKKAIMEANLGVSIISDDNQIIRLQLPIPSEERRKELVKIAHKYQEKSKIIVRNIRRDGIELIKQMEQNTECSKDEAHIYSKEIQELTDKYCDKIDKIIKLKEQDIINL</sequence>
<reference key="1">
    <citation type="journal article" date="2008" name="DNA Res.">
        <title>The whole-genome sequencing of the obligate intracellular bacterium Orientia tsutsugamushi revealed massive gene amplification during reductive genome evolution.</title>
        <authorList>
            <person name="Nakayama K."/>
            <person name="Yamashita A."/>
            <person name="Kurokawa K."/>
            <person name="Morimoto T."/>
            <person name="Ogawa M."/>
            <person name="Fukuhara M."/>
            <person name="Urakami H."/>
            <person name="Ohnishi M."/>
            <person name="Uchiyama I."/>
            <person name="Ogura Y."/>
            <person name="Ooka T."/>
            <person name="Oshima K."/>
            <person name="Tamura A."/>
            <person name="Hattori M."/>
            <person name="Hayashi T."/>
        </authorList>
    </citation>
    <scope>NUCLEOTIDE SEQUENCE [LARGE SCALE GENOMIC DNA]</scope>
    <source>
        <strain>Ikeda</strain>
    </source>
</reference>
<accession>B3CUK4</accession>
<feature type="chain" id="PRO_1000090764" description="Ribosome-recycling factor">
    <location>
        <begin position="1"/>
        <end position="187"/>
    </location>
</feature>
<dbReference type="EMBL" id="AP008981">
    <property type="protein sequence ID" value="BAG41051.1"/>
    <property type="molecule type" value="Genomic_DNA"/>
</dbReference>
<dbReference type="RefSeq" id="WP_012462051.1">
    <property type="nucleotide sequence ID" value="NC_010793.1"/>
</dbReference>
<dbReference type="SMR" id="B3CUK4"/>
<dbReference type="GeneID" id="89460135"/>
<dbReference type="KEGG" id="ott:OTT_1593"/>
<dbReference type="HOGENOM" id="CLU_073981_2_1_5"/>
<dbReference type="OrthoDB" id="9804006at2"/>
<dbReference type="Proteomes" id="UP000001033">
    <property type="component" value="Chromosome"/>
</dbReference>
<dbReference type="GO" id="GO:0005829">
    <property type="term" value="C:cytosol"/>
    <property type="evidence" value="ECO:0007669"/>
    <property type="project" value="GOC"/>
</dbReference>
<dbReference type="GO" id="GO:0043023">
    <property type="term" value="F:ribosomal large subunit binding"/>
    <property type="evidence" value="ECO:0007669"/>
    <property type="project" value="TreeGrafter"/>
</dbReference>
<dbReference type="GO" id="GO:0002184">
    <property type="term" value="P:cytoplasmic translational termination"/>
    <property type="evidence" value="ECO:0007669"/>
    <property type="project" value="TreeGrafter"/>
</dbReference>
<dbReference type="FunFam" id="1.10.132.20:FF:000001">
    <property type="entry name" value="Ribosome-recycling factor"/>
    <property type="match status" value="1"/>
</dbReference>
<dbReference type="FunFam" id="3.30.1360.40:FF:000001">
    <property type="entry name" value="Ribosome-recycling factor"/>
    <property type="match status" value="1"/>
</dbReference>
<dbReference type="Gene3D" id="3.30.1360.40">
    <property type="match status" value="1"/>
</dbReference>
<dbReference type="Gene3D" id="1.10.132.20">
    <property type="entry name" value="Ribosome-recycling factor"/>
    <property type="match status" value="1"/>
</dbReference>
<dbReference type="HAMAP" id="MF_00040">
    <property type="entry name" value="RRF"/>
    <property type="match status" value="1"/>
</dbReference>
<dbReference type="InterPro" id="IPR002661">
    <property type="entry name" value="Ribosome_recyc_fac"/>
</dbReference>
<dbReference type="InterPro" id="IPR023584">
    <property type="entry name" value="Ribosome_recyc_fac_dom"/>
</dbReference>
<dbReference type="InterPro" id="IPR036191">
    <property type="entry name" value="RRF_sf"/>
</dbReference>
<dbReference type="NCBIfam" id="TIGR00496">
    <property type="entry name" value="frr"/>
    <property type="match status" value="1"/>
</dbReference>
<dbReference type="PANTHER" id="PTHR20982:SF3">
    <property type="entry name" value="MITOCHONDRIAL RIBOSOME RECYCLING FACTOR PSEUDO 1"/>
    <property type="match status" value="1"/>
</dbReference>
<dbReference type="PANTHER" id="PTHR20982">
    <property type="entry name" value="RIBOSOME RECYCLING FACTOR"/>
    <property type="match status" value="1"/>
</dbReference>
<dbReference type="Pfam" id="PF01765">
    <property type="entry name" value="RRF"/>
    <property type="match status" value="1"/>
</dbReference>
<dbReference type="SUPFAM" id="SSF55194">
    <property type="entry name" value="Ribosome recycling factor, RRF"/>
    <property type="match status" value="1"/>
</dbReference>
<gene>
    <name evidence="1" type="primary">frr</name>
    <name type="ordered locus">OTT_1593</name>
</gene>
<protein>
    <recommendedName>
        <fullName evidence="1">Ribosome-recycling factor</fullName>
        <shortName evidence="1">RRF</shortName>
    </recommendedName>
    <alternativeName>
        <fullName evidence="1">Ribosome-releasing factor</fullName>
    </alternativeName>
</protein>